<sequence>MDAFKLLTRATKLKTGATPSSAQSSTRLPSTGKAENPQLFRNSEAEKVLEQAQQGKKRKRTAAAEARDADDDAAELNFFGARKAAVSSTPTSKEEKQEQERSGEDDASDEEVEFMDEVQRRTVLNAHKIKVTDLRDLEEIQPVRVASEEPKKKKKKRKQQEEEESKVPLTKKEQKKARRLYPEPLVSFKELRSKYKISSRLAENIAEQGFTVPTEVQLGTLPLLLGGFESKAGESVEPDLLVVAPTGSGKTLSFLIPVINKIVRHHHDQSQEQERGIFSIIVAPTKELASQIVNEGRKLVHGTGVKIALMKKGMRVVEREDEDDDGDDSSSEDGDESSESEHEERPIAKKSKGKAPVTKSDILVTTPLQLVNALSTNQTKPMATLPLVRNIVLDEADVLLDPLFRDQTLNIWRACTHPELRASLWSATMGSNVEDLAKSTIKERKEAVNQTKSYPLLRLVVGLKDSAIPNIEHKLIYAATEQGKLLGLRQLLHPTAASASDVRLRPPFLIFTQTIPRAVALHSELRYDIPTEAGGSSRIAVLHSDLSDGQRSEIMKNFRKGEIWILVTTDLLARGVDFRGINGVVNYDIPNSAAVYVHRVGRTGRAGREGGIAVTYYTKEDIPYVKSIANIIDVSEKLRGKTGEKSIQKWLLDALPDLSKKDKKELKKHGVKARQSNLKSDKDDKEHRKTRISTKSGFERRIENKKKALIAANRNRKSQAQSAADGDSGNESWDGLEN</sequence>
<protein>
    <recommendedName>
        <fullName>ATP-dependent RNA helicase rok1</fullName>
        <ecNumber>3.6.4.13</ecNumber>
    </recommendedName>
</protein>
<gene>
    <name type="primary">rok1</name>
    <name type="ORF">ACLA_019270</name>
</gene>
<accession>A1CNK1</accession>
<feature type="chain" id="PRO_0000282699" description="ATP-dependent RNA helicase rok1">
    <location>
        <begin position="1"/>
        <end position="738"/>
    </location>
</feature>
<feature type="domain" description="Helicase ATP-binding" evidence="2">
    <location>
        <begin position="231"/>
        <end position="447"/>
    </location>
</feature>
<feature type="domain" description="Helicase C-terminal" evidence="3">
    <location>
        <begin position="487"/>
        <end position="655"/>
    </location>
</feature>
<feature type="region of interest" description="Disordered" evidence="4">
    <location>
        <begin position="1"/>
        <end position="112"/>
    </location>
</feature>
<feature type="region of interest" description="Disordered" evidence="4">
    <location>
        <begin position="145"/>
        <end position="176"/>
    </location>
</feature>
<feature type="region of interest" description="Disordered" evidence="4">
    <location>
        <begin position="316"/>
        <end position="356"/>
    </location>
</feature>
<feature type="region of interest" description="Disordered" evidence="4">
    <location>
        <begin position="663"/>
        <end position="738"/>
    </location>
</feature>
<feature type="short sequence motif" description="Q motif">
    <location>
        <begin position="190"/>
        <end position="218"/>
    </location>
</feature>
<feature type="short sequence motif" description="DEAD box">
    <location>
        <begin position="394"/>
        <end position="397"/>
    </location>
</feature>
<feature type="compositionally biased region" description="Polar residues" evidence="4">
    <location>
        <begin position="17"/>
        <end position="29"/>
    </location>
</feature>
<feature type="compositionally biased region" description="Basic and acidic residues" evidence="4">
    <location>
        <begin position="92"/>
        <end position="104"/>
    </location>
</feature>
<feature type="compositionally biased region" description="Acidic residues" evidence="4">
    <location>
        <begin position="319"/>
        <end position="338"/>
    </location>
</feature>
<feature type="compositionally biased region" description="Basic and acidic residues" evidence="4">
    <location>
        <begin position="697"/>
        <end position="706"/>
    </location>
</feature>
<feature type="binding site" evidence="2">
    <location>
        <begin position="244"/>
        <end position="251"/>
    </location>
    <ligand>
        <name>ATP</name>
        <dbReference type="ChEBI" id="CHEBI:30616"/>
    </ligand>
</feature>
<organism>
    <name type="scientific">Aspergillus clavatus (strain ATCC 1007 / CBS 513.65 / DSM 816 / NCTC 3887 / NRRL 1 / QM 1276 / 107)</name>
    <dbReference type="NCBI Taxonomy" id="344612"/>
    <lineage>
        <taxon>Eukaryota</taxon>
        <taxon>Fungi</taxon>
        <taxon>Dikarya</taxon>
        <taxon>Ascomycota</taxon>
        <taxon>Pezizomycotina</taxon>
        <taxon>Eurotiomycetes</taxon>
        <taxon>Eurotiomycetidae</taxon>
        <taxon>Eurotiales</taxon>
        <taxon>Aspergillaceae</taxon>
        <taxon>Aspergillus</taxon>
        <taxon>Aspergillus subgen. Fumigati</taxon>
    </lineage>
</organism>
<dbReference type="EC" id="3.6.4.13"/>
<dbReference type="EMBL" id="DS027059">
    <property type="protein sequence ID" value="EAW07222.1"/>
    <property type="molecule type" value="Genomic_DNA"/>
</dbReference>
<dbReference type="RefSeq" id="XP_001268648.1">
    <property type="nucleotide sequence ID" value="XM_001268647.1"/>
</dbReference>
<dbReference type="SMR" id="A1CNK1"/>
<dbReference type="STRING" id="344612.A1CNK1"/>
<dbReference type="EnsemblFungi" id="EAW07222">
    <property type="protein sequence ID" value="EAW07222"/>
    <property type="gene ID" value="ACLA_019270"/>
</dbReference>
<dbReference type="GeneID" id="4701754"/>
<dbReference type="KEGG" id="act:ACLA_019270"/>
<dbReference type="VEuPathDB" id="FungiDB:ACLA_019270"/>
<dbReference type="eggNOG" id="KOG0344">
    <property type="taxonomic scope" value="Eukaryota"/>
</dbReference>
<dbReference type="HOGENOM" id="CLU_003041_1_4_1"/>
<dbReference type="OMA" id="FRAGEIW"/>
<dbReference type="OrthoDB" id="360161at2759"/>
<dbReference type="Proteomes" id="UP000006701">
    <property type="component" value="Unassembled WGS sequence"/>
</dbReference>
<dbReference type="GO" id="GO:0005829">
    <property type="term" value="C:cytosol"/>
    <property type="evidence" value="ECO:0007669"/>
    <property type="project" value="TreeGrafter"/>
</dbReference>
<dbReference type="GO" id="GO:0005730">
    <property type="term" value="C:nucleolus"/>
    <property type="evidence" value="ECO:0007669"/>
    <property type="project" value="UniProtKB-SubCell"/>
</dbReference>
<dbReference type="GO" id="GO:0005524">
    <property type="term" value="F:ATP binding"/>
    <property type="evidence" value="ECO:0007669"/>
    <property type="project" value="UniProtKB-KW"/>
</dbReference>
<dbReference type="GO" id="GO:0016887">
    <property type="term" value="F:ATP hydrolysis activity"/>
    <property type="evidence" value="ECO:0007669"/>
    <property type="project" value="RHEA"/>
</dbReference>
<dbReference type="GO" id="GO:0003723">
    <property type="term" value="F:RNA binding"/>
    <property type="evidence" value="ECO:0007669"/>
    <property type="project" value="UniProtKB-KW"/>
</dbReference>
<dbReference type="GO" id="GO:0003724">
    <property type="term" value="F:RNA helicase activity"/>
    <property type="evidence" value="ECO:0007669"/>
    <property type="project" value="UniProtKB-EC"/>
</dbReference>
<dbReference type="GO" id="GO:0030490">
    <property type="term" value="P:maturation of SSU-rRNA"/>
    <property type="evidence" value="ECO:0007669"/>
    <property type="project" value="InterPro"/>
</dbReference>
<dbReference type="CDD" id="cd17957">
    <property type="entry name" value="DEADc_DDX52"/>
    <property type="match status" value="1"/>
</dbReference>
<dbReference type="CDD" id="cd18787">
    <property type="entry name" value="SF2_C_DEAD"/>
    <property type="match status" value="1"/>
</dbReference>
<dbReference type="Gene3D" id="3.40.50.300">
    <property type="entry name" value="P-loop containing nucleotide triphosphate hydrolases"/>
    <property type="match status" value="2"/>
</dbReference>
<dbReference type="InterPro" id="IPR044764">
    <property type="entry name" value="DDX52/Rok1_DEADc"/>
</dbReference>
<dbReference type="InterPro" id="IPR011545">
    <property type="entry name" value="DEAD/DEAH_box_helicase_dom"/>
</dbReference>
<dbReference type="InterPro" id="IPR050079">
    <property type="entry name" value="DEAD_box_RNA_helicase"/>
</dbReference>
<dbReference type="InterPro" id="IPR014001">
    <property type="entry name" value="Helicase_ATP-bd"/>
</dbReference>
<dbReference type="InterPro" id="IPR001650">
    <property type="entry name" value="Helicase_C-like"/>
</dbReference>
<dbReference type="InterPro" id="IPR027417">
    <property type="entry name" value="P-loop_NTPase"/>
</dbReference>
<dbReference type="PANTHER" id="PTHR47959">
    <property type="entry name" value="ATP-DEPENDENT RNA HELICASE RHLE-RELATED"/>
    <property type="match status" value="1"/>
</dbReference>
<dbReference type="PANTHER" id="PTHR47959:SF15">
    <property type="entry name" value="RNA HELICASE"/>
    <property type="match status" value="1"/>
</dbReference>
<dbReference type="Pfam" id="PF00270">
    <property type="entry name" value="DEAD"/>
    <property type="match status" value="1"/>
</dbReference>
<dbReference type="Pfam" id="PF00271">
    <property type="entry name" value="Helicase_C"/>
    <property type="match status" value="1"/>
</dbReference>
<dbReference type="SMART" id="SM00487">
    <property type="entry name" value="DEXDc"/>
    <property type="match status" value="1"/>
</dbReference>
<dbReference type="SMART" id="SM00490">
    <property type="entry name" value="HELICc"/>
    <property type="match status" value="1"/>
</dbReference>
<dbReference type="SUPFAM" id="SSF52540">
    <property type="entry name" value="P-loop containing nucleoside triphosphate hydrolases"/>
    <property type="match status" value="2"/>
</dbReference>
<dbReference type="PROSITE" id="PS51192">
    <property type="entry name" value="HELICASE_ATP_BIND_1"/>
    <property type="match status" value="1"/>
</dbReference>
<dbReference type="PROSITE" id="PS51194">
    <property type="entry name" value="HELICASE_CTER"/>
    <property type="match status" value="1"/>
</dbReference>
<dbReference type="PROSITE" id="PS51195">
    <property type="entry name" value="Q_MOTIF"/>
    <property type="match status" value="1"/>
</dbReference>
<comment type="function">
    <text>ATP-dependent RNA helicase involved in 40S ribosomal subunit biogenesis. Required for the processing and cleavage of 35S pre-rRNA at sites A0, A1, and A2, leading to mature 18S rRNA.</text>
</comment>
<comment type="catalytic activity">
    <reaction>
        <text>ATP + H2O = ADP + phosphate + H(+)</text>
        <dbReference type="Rhea" id="RHEA:13065"/>
        <dbReference type="ChEBI" id="CHEBI:15377"/>
        <dbReference type="ChEBI" id="CHEBI:15378"/>
        <dbReference type="ChEBI" id="CHEBI:30616"/>
        <dbReference type="ChEBI" id="CHEBI:43474"/>
        <dbReference type="ChEBI" id="CHEBI:456216"/>
        <dbReference type="EC" id="3.6.4.13"/>
    </reaction>
</comment>
<comment type="subunit">
    <text evidence="1">Interacts with the U3 snoRNA and is associated with the 90S and 40S pre-ribosomes.</text>
</comment>
<comment type="subcellular location">
    <subcellularLocation>
        <location evidence="1">Nucleus</location>
        <location evidence="1">Nucleolus</location>
    </subcellularLocation>
</comment>
<comment type="domain">
    <text>The Q motif is unique to and characteristic of the DEAD box family of RNA helicases and controls ATP binding and hydrolysis.</text>
</comment>
<comment type="similarity">
    <text evidence="5">Belongs to the DEAD box helicase family. DDX52/ROK1 subfamily.</text>
</comment>
<proteinExistence type="inferred from homology"/>
<reference key="1">
    <citation type="journal article" date="2008" name="PLoS Genet.">
        <title>Genomic islands in the pathogenic filamentous fungus Aspergillus fumigatus.</title>
        <authorList>
            <person name="Fedorova N.D."/>
            <person name="Khaldi N."/>
            <person name="Joardar V.S."/>
            <person name="Maiti R."/>
            <person name="Amedeo P."/>
            <person name="Anderson M.J."/>
            <person name="Crabtree J."/>
            <person name="Silva J.C."/>
            <person name="Badger J.H."/>
            <person name="Albarraq A."/>
            <person name="Angiuoli S."/>
            <person name="Bussey H."/>
            <person name="Bowyer P."/>
            <person name="Cotty P.J."/>
            <person name="Dyer P.S."/>
            <person name="Egan A."/>
            <person name="Galens K."/>
            <person name="Fraser-Liggett C.M."/>
            <person name="Haas B.J."/>
            <person name="Inman J.M."/>
            <person name="Kent R."/>
            <person name="Lemieux S."/>
            <person name="Malavazi I."/>
            <person name="Orvis J."/>
            <person name="Roemer T."/>
            <person name="Ronning C.M."/>
            <person name="Sundaram J.P."/>
            <person name="Sutton G."/>
            <person name="Turner G."/>
            <person name="Venter J.C."/>
            <person name="White O.R."/>
            <person name="Whitty B.R."/>
            <person name="Youngman P."/>
            <person name="Wolfe K.H."/>
            <person name="Goldman G.H."/>
            <person name="Wortman J.R."/>
            <person name="Jiang B."/>
            <person name="Denning D.W."/>
            <person name="Nierman W.C."/>
        </authorList>
    </citation>
    <scope>NUCLEOTIDE SEQUENCE [LARGE SCALE GENOMIC DNA]</scope>
    <source>
        <strain>ATCC 1007 / CBS 513.65 / DSM 816 / NCTC 3887 / NRRL 1 / QM 1276 / 107</strain>
    </source>
</reference>
<keyword id="KW-0067">ATP-binding</keyword>
<keyword id="KW-0347">Helicase</keyword>
<keyword id="KW-0378">Hydrolase</keyword>
<keyword id="KW-0547">Nucleotide-binding</keyword>
<keyword id="KW-0539">Nucleus</keyword>
<keyword id="KW-1185">Reference proteome</keyword>
<keyword id="KW-0690">Ribosome biogenesis</keyword>
<keyword id="KW-0694">RNA-binding</keyword>
<keyword id="KW-0698">rRNA processing</keyword>
<name>ROK1_ASPCL</name>
<evidence type="ECO:0000250" key="1"/>
<evidence type="ECO:0000255" key="2">
    <source>
        <dbReference type="PROSITE-ProRule" id="PRU00541"/>
    </source>
</evidence>
<evidence type="ECO:0000255" key="3">
    <source>
        <dbReference type="PROSITE-ProRule" id="PRU00542"/>
    </source>
</evidence>
<evidence type="ECO:0000256" key="4">
    <source>
        <dbReference type="SAM" id="MobiDB-lite"/>
    </source>
</evidence>
<evidence type="ECO:0000305" key="5"/>